<protein>
    <recommendedName>
        <fullName evidence="1">Heptaprenylglyceryl phosphate synthase</fullName>
        <shortName evidence="1">HepGP synthase</shortName>
        <ecNumber evidence="1">2.5.1.n9</ecNumber>
    </recommendedName>
    <alternativeName>
        <fullName evidence="1">Glycerol-1-phosphate heptaprenyltransferase</fullName>
    </alternativeName>
</protein>
<proteinExistence type="inferred from homology"/>
<sequence>MKNYDEWAHVFKLDPNKEITDEALEAVCESGTDAIIVGGTDNVTLDNTLSLFARIRRFPVTCALEVSDLEAITPGFDYYLIPSVMNSQHVSWVIGHHHKAVKEYGEIINWQELLLEGYCVLNGEARVANHANAQTDLDIEDVVAYARLAEHMYRYPFFYLEYSGKKGPIDVVKRASAVLEKTKLIYGGGIKNAADASEIAAYADVVVVGNGLYENLKEALKTVEAVKEHKCR</sequence>
<name>PCRB_SHOC1</name>
<comment type="function">
    <text evidence="1">Prenyltransferase that catalyzes in vivo the transfer of the heptaprenyl moiety of heptaprenyl pyrophosphate (HepPP; 35 carbon atoms) to the C3 hydroxyl of sn-glycerol-1-phosphate (G1P), producing heptaprenylglyceryl phosphate (HepGP). This reaction is an ether-bond-formation step in the biosynthesis of archaea-type G1P-based membrane lipids found in Bacillales.</text>
</comment>
<comment type="catalytic activity">
    <reaction evidence="1">
        <text>sn-glycerol 1-phosphate + all-trans-heptaprenyl diphosphate = 3-heptaprenyl-sn-glycero-1-phosphate + diphosphate</text>
        <dbReference type="Rhea" id="RHEA:33495"/>
        <dbReference type="ChEBI" id="CHEBI:33019"/>
        <dbReference type="ChEBI" id="CHEBI:57685"/>
        <dbReference type="ChEBI" id="CHEBI:58206"/>
        <dbReference type="ChEBI" id="CHEBI:64781"/>
        <dbReference type="EC" id="2.5.1.n9"/>
    </reaction>
</comment>
<comment type="cofactor">
    <cofactor evidence="1">
        <name>Mg(2+)</name>
        <dbReference type="ChEBI" id="CHEBI:18420"/>
    </cofactor>
</comment>
<comment type="pathway">
    <text evidence="1">Membrane lipid metabolism; glycerophospholipid metabolism.</text>
</comment>
<comment type="subunit">
    <text evidence="1">Homodimer.</text>
</comment>
<comment type="similarity">
    <text evidence="1">Belongs to the GGGP/HepGP synthase family. Group I subfamily.</text>
</comment>
<dbReference type="EC" id="2.5.1.n9" evidence="1"/>
<dbReference type="EMBL" id="AP006627">
    <property type="protein sequence ID" value="BAD63623.1"/>
    <property type="molecule type" value="Genomic_DNA"/>
</dbReference>
<dbReference type="RefSeq" id="WP_011245938.1">
    <property type="nucleotide sequence ID" value="NC_006582.1"/>
</dbReference>
<dbReference type="SMR" id="Q5WJ32"/>
<dbReference type="STRING" id="66692.ABC1085"/>
<dbReference type="KEGG" id="bcl:ABC1085"/>
<dbReference type="eggNOG" id="COG1646">
    <property type="taxonomic scope" value="Bacteria"/>
</dbReference>
<dbReference type="HOGENOM" id="CLU_095211_0_0_9"/>
<dbReference type="OrthoDB" id="2381757at2"/>
<dbReference type="UniPathway" id="UPA00940"/>
<dbReference type="Proteomes" id="UP000001168">
    <property type="component" value="Chromosome"/>
</dbReference>
<dbReference type="GO" id="GO:0120536">
    <property type="term" value="F:heptaprenylglyceryl phosphate synthase activity"/>
    <property type="evidence" value="ECO:0007669"/>
    <property type="project" value="RHEA"/>
</dbReference>
<dbReference type="GO" id="GO:0000287">
    <property type="term" value="F:magnesium ion binding"/>
    <property type="evidence" value="ECO:0007669"/>
    <property type="project" value="UniProtKB-UniRule"/>
</dbReference>
<dbReference type="GO" id="GO:0046474">
    <property type="term" value="P:glycerophospholipid biosynthetic process"/>
    <property type="evidence" value="ECO:0007669"/>
    <property type="project" value="UniProtKB-UniRule"/>
</dbReference>
<dbReference type="CDD" id="cd02812">
    <property type="entry name" value="PcrB_like"/>
    <property type="match status" value="1"/>
</dbReference>
<dbReference type="FunFam" id="3.20.20.390:FF:000001">
    <property type="entry name" value="Heptaprenylglyceryl phosphate synthase"/>
    <property type="match status" value="1"/>
</dbReference>
<dbReference type="Gene3D" id="3.20.20.390">
    <property type="entry name" value="FMN-linked oxidoreductases"/>
    <property type="match status" value="1"/>
</dbReference>
<dbReference type="HAMAP" id="MF_00112">
    <property type="entry name" value="GGGP_HepGP_synthase"/>
    <property type="match status" value="1"/>
</dbReference>
<dbReference type="InterPro" id="IPR039074">
    <property type="entry name" value="GGGP/HepGP_synthase_I"/>
</dbReference>
<dbReference type="InterPro" id="IPR038597">
    <property type="entry name" value="GGGP/HepGP_synthase_sf"/>
</dbReference>
<dbReference type="InterPro" id="IPR008205">
    <property type="entry name" value="GGGP_HepGP_synthase"/>
</dbReference>
<dbReference type="NCBIfam" id="TIGR01768">
    <property type="entry name" value="GGGP-family"/>
    <property type="match status" value="1"/>
</dbReference>
<dbReference type="NCBIfam" id="NF003197">
    <property type="entry name" value="PRK04169.1-1"/>
    <property type="match status" value="1"/>
</dbReference>
<dbReference type="NCBIfam" id="NF003199">
    <property type="entry name" value="PRK04169.1-3"/>
    <property type="match status" value="1"/>
</dbReference>
<dbReference type="PANTHER" id="PTHR40029">
    <property type="match status" value="1"/>
</dbReference>
<dbReference type="PANTHER" id="PTHR40029:SF2">
    <property type="entry name" value="HEPTAPRENYLGLYCERYL PHOSPHATE SYNTHASE"/>
    <property type="match status" value="1"/>
</dbReference>
<dbReference type="Pfam" id="PF01884">
    <property type="entry name" value="PcrB"/>
    <property type="match status" value="1"/>
</dbReference>
<dbReference type="SUPFAM" id="SSF51395">
    <property type="entry name" value="FMN-linked oxidoreductases"/>
    <property type="match status" value="1"/>
</dbReference>
<accession>Q5WJ32</accession>
<evidence type="ECO:0000255" key="1">
    <source>
        <dbReference type="HAMAP-Rule" id="MF_00112"/>
    </source>
</evidence>
<feature type="chain" id="PRO_0000138710" description="Heptaprenylglyceryl phosphate synthase">
    <location>
        <begin position="1"/>
        <end position="232"/>
    </location>
</feature>
<feature type="binding site" evidence="1">
    <location>
        <position position="12"/>
    </location>
    <ligand>
        <name>sn-glycerol 1-phosphate</name>
        <dbReference type="ChEBI" id="CHEBI:57685"/>
    </ligand>
</feature>
<feature type="binding site" evidence="1">
    <location>
        <position position="14"/>
    </location>
    <ligand>
        <name>Mg(2+)</name>
        <dbReference type="ChEBI" id="CHEBI:18420"/>
    </ligand>
</feature>
<feature type="binding site" evidence="1">
    <location>
        <position position="40"/>
    </location>
    <ligand>
        <name>Mg(2+)</name>
        <dbReference type="ChEBI" id="CHEBI:18420"/>
    </ligand>
</feature>
<feature type="binding site" evidence="1">
    <location>
        <begin position="159"/>
        <end position="164"/>
    </location>
    <ligand>
        <name>sn-glycerol 1-phosphate</name>
        <dbReference type="ChEBI" id="CHEBI:57685"/>
    </ligand>
</feature>
<feature type="binding site" evidence="1">
    <location>
        <position position="189"/>
    </location>
    <ligand>
        <name>sn-glycerol 1-phosphate</name>
        <dbReference type="ChEBI" id="CHEBI:57685"/>
    </ligand>
</feature>
<feature type="binding site" evidence="1">
    <location>
        <begin position="209"/>
        <end position="210"/>
    </location>
    <ligand>
        <name>sn-glycerol 1-phosphate</name>
        <dbReference type="ChEBI" id="CHEBI:57685"/>
    </ligand>
</feature>
<reference key="1">
    <citation type="submission" date="2003-10" db="EMBL/GenBank/DDBJ databases">
        <title>The complete genome sequence of the alkaliphilic Bacillus clausii KSM-K16.</title>
        <authorList>
            <person name="Takaki Y."/>
            <person name="Kageyama Y."/>
            <person name="Shimamura S."/>
            <person name="Suzuki H."/>
            <person name="Nishi S."/>
            <person name="Hatada Y."/>
            <person name="Kawai S."/>
            <person name="Ito S."/>
            <person name="Horikoshi K."/>
        </authorList>
    </citation>
    <scope>NUCLEOTIDE SEQUENCE [LARGE SCALE GENOMIC DNA]</scope>
    <source>
        <strain>KSM-K16</strain>
    </source>
</reference>
<gene>
    <name evidence="1" type="primary">pcrB</name>
    <name type="ordered locus">ABC1085</name>
</gene>
<keyword id="KW-0444">Lipid biosynthesis</keyword>
<keyword id="KW-0443">Lipid metabolism</keyword>
<keyword id="KW-0460">Magnesium</keyword>
<keyword id="KW-0479">Metal-binding</keyword>
<keyword id="KW-0594">Phospholipid biosynthesis</keyword>
<keyword id="KW-1208">Phospholipid metabolism</keyword>
<keyword id="KW-1185">Reference proteome</keyword>
<keyword id="KW-0808">Transferase</keyword>
<organism>
    <name type="scientific">Shouchella clausii (strain KSM-K16)</name>
    <name type="common">Alkalihalobacillus clausii</name>
    <dbReference type="NCBI Taxonomy" id="66692"/>
    <lineage>
        <taxon>Bacteria</taxon>
        <taxon>Bacillati</taxon>
        <taxon>Bacillota</taxon>
        <taxon>Bacilli</taxon>
        <taxon>Bacillales</taxon>
        <taxon>Bacillaceae</taxon>
        <taxon>Shouchella</taxon>
    </lineage>
</organism>